<protein>
    <recommendedName>
        <fullName evidence="1">Aspartyl/glutamyl-tRNA(Asn/Gln) amidotransferase subunit B</fullName>
        <shortName evidence="1">Asp/Glu-ADT subunit B</shortName>
        <ecNumber evidence="1">6.3.5.-</ecNumber>
    </recommendedName>
</protein>
<proteinExistence type="inferred from homology"/>
<accession>B9J1N1</accession>
<keyword id="KW-0067">ATP-binding</keyword>
<keyword id="KW-0436">Ligase</keyword>
<keyword id="KW-0547">Nucleotide-binding</keyword>
<keyword id="KW-0648">Protein biosynthesis</keyword>
<evidence type="ECO:0000255" key="1">
    <source>
        <dbReference type="HAMAP-Rule" id="MF_00121"/>
    </source>
</evidence>
<reference key="1">
    <citation type="journal article" date="2009" name="J. Bacteriol.">
        <title>Complete genome sequence of the extremophilic Bacillus cereus strain Q1 with industrial applications.</title>
        <authorList>
            <person name="Xiong Z."/>
            <person name="Jiang Y."/>
            <person name="Qi D."/>
            <person name="Lu H."/>
            <person name="Yang F."/>
            <person name="Yang J."/>
            <person name="Chen L."/>
            <person name="Sun L."/>
            <person name="Xu X."/>
            <person name="Xue Y."/>
            <person name="Zhu Y."/>
            <person name="Jin Q."/>
        </authorList>
    </citation>
    <scope>NUCLEOTIDE SEQUENCE [LARGE SCALE GENOMIC DNA]</scope>
    <source>
        <strain>Q1</strain>
    </source>
</reference>
<gene>
    <name evidence="1" type="primary">gatB</name>
    <name type="ordered locus">BCQ_0372</name>
</gene>
<dbReference type="EC" id="6.3.5.-" evidence="1"/>
<dbReference type="EMBL" id="CP000227">
    <property type="protein sequence ID" value="ACM10844.1"/>
    <property type="molecule type" value="Genomic_DNA"/>
</dbReference>
<dbReference type="SMR" id="B9J1N1"/>
<dbReference type="KEGG" id="bcq:BCQ_0372"/>
<dbReference type="HOGENOM" id="CLU_019240_0_0_9"/>
<dbReference type="Proteomes" id="UP000000441">
    <property type="component" value="Chromosome"/>
</dbReference>
<dbReference type="GO" id="GO:0050566">
    <property type="term" value="F:asparaginyl-tRNA synthase (glutamine-hydrolyzing) activity"/>
    <property type="evidence" value="ECO:0007669"/>
    <property type="project" value="RHEA"/>
</dbReference>
<dbReference type="GO" id="GO:0005524">
    <property type="term" value="F:ATP binding"/>
    <property type="evidence" value="ECO:0007669"/>
    <property type="project" value="UniProtKB-KW"/>
</dbReference>
<dbReference type="GO" id="GO:0050567">
    <property type="term" value="F:glutaminyl-tRNA synthase (glutamine-hydrolyzing) activity"/>
    <property type="evidence" value="ECO:0007669"/>
    <property type="project" value="UniProtKB-UniRule"/>
</dbReference>
<dbReference type="GO" id="GO:0070681">
    <property type="term" value="P:glutaminyl-tRNAGln biosynthesis via transamidation"/>
    <property type="evidence" value="ECO:0007669"/>
    <property type="project" value="TreeGrafter"/>
</dbReference>
<dbReference type="GO" id="GO:0006412">
    <property type="term" value="P:translation"/>
    <property type="evidence" value="ECO:0007669"/>
    <property type="project" value="UniProtKB-UniRule"/>
</dbReference>
<dbReference type="FunFam" id="1.10.10.410:FF:000001">
    <property type="entry name" value="Aspartyl/glutamyl-tRNA(Asn/Gln) amidotransferase subunit B"/>
    <property type="match status" value="1"/>
</dbReference>
<dbReference type="FunFam" id="1.10.150.380:FF:000001">
    <property type="entry name" value="Aspartyl/glutamyl-tRNA(Asn/Gln) amidotransferase subunit B"/>
    <property type="match status" value="1"/>
</dbReference>
<dbReference type="Gene3D" id="1.10.10.410">
    <property type="match status" value="1"/>
</dbReference>
<dbReference type="Gene3D" id="1.10.150.380">
    <property type="entry name" value="GatB domain, N-terminal subdomain"/>
    <property type="match status" value="1"/>
</dbReference>
<dbReference type="HAMAP" id="MF_00121">
    <property type="entry name" value="GatB"/>
    <property type="match status" value="1"/>
</dbReference>
<dbReference type="InterPro" id="IPR017959">
    <property type="entry name" value="Asn/Gln-tRNA_amidoTrfase_suB/E"/>
</dbReference>
<dbReference type="InterPro" id="IPR006075">
    <property type="entry name" value="Asn/Gln-tRNA_Trfase_suB/E_cat"/>
</dbReference>
<dbReference type="InterPro" id="IPR018027">
    <property type="entry name" value="Asn/Gln_amidotransferase"/>
</dbReference>
<dbReference type="InterPro" id="IPR003789">
    <property type="entry name" value="Asn/Gln_tRNA_amidoTrase-B-like"/>
</dbReference>
<dbReference type="InterPro" id="IPR004413">
    <property type="entry name" value="GatB"/>
</dbReference>
<dbReference type="InterPro" id="IPR042114">
    <property type="entry name" value="GatB_C_1"/>
</dbReference>
<dbReference type="InterPro" id="IPR023168">
    <property type="entry name" value="GatB_Yqey_C_2"/>
</dbReference>
<dbReference type="InterPro" id="IPR017958">
    <property type="entry name" value="Gln-tRNA_amidoTrfase_suB_CS"/>
</dbReference>
<dbReference type="InterPro" id="IPR014746">
    <property type="entry name" value="Gln_synth/guanido_kin_cat_dom"/>
</dbReference>
<dbReference type="NCBIfam" id="TIGR00133">
    <property type="entry name" value="gatB"/>
    <property type="match status" value="1"/>
</dbReference>
<dbReference type="NCBIfam" id="NF004011">
    <property type="entry name" value="PRK05477.1-1"/>
    <property type="match status" value="1"/>
</dbReference>
<dbReference type="NCBIfam" id="NF004012">
    <property type="entry name" value="PRK05477.1-2"/>
    <property type="match status" value="1"/>
</dbReference>
<dbReference type="NCBIfam" id="NF004014">
    <property type="entry name" value="PRK05477.1-4"/>
    <property type="match status" value="1"/>
</dbReference>
<dbReference type="PANTHER" id="PTHR11659">
    <property type="entry name" value="GLUTAMYL-TRNA GLN AMIDOTRANSFERASE SUBUNIT B MITOCHONDRIAL AND PROKARYOTIC PET112-RELATED"/>
    <property type="match status" value="1"/>
</dbReference>
<dbReference type="PANTHER" id="PTHR11659:SF0">
    <property type="entry name" value="GLUTAMYL-TRNA(GLN) AMIDOTRANSFERASE SUBUNIT B, MITOCHONDRIAL"/>
    <property type="match status" value="1"/>
</dbReference>
<dbReference type="Pfam" id="PF02934">
    <property type="entry name" value="GatB_N"/>
    <property type="match status" value="1"/>
</dbReference>
<dbReference type="Pfam" id="PF02637">
    <property type="entry name" value="GatB_Yqey"/>
    <property type="match status" value="1"/>
</dbReference>
<dbReference type="SMART" id="SM00845">
    <property type="entry name" value="GatB_Yqey"/>
    <property type="match status" value="1"/>
</dbReference>
<dbReference type="SUPFAM" id="SSF89095">
    <property type="entry name" value="GatB/YqeY motif"/>
    <property type="match status" value="1"/>
</dbReference>
<dbReference type="SUPFAM" id="SSF55931">
    <property type="entry name" value="Glutamine synthetase/guanido kinase"/>
    <property type="match status" value="1"/>
</dbReference>
<dbReference type="PROSITE" id="PS01234">
    <property type="entry name" value="GATB"/>
    <property type="match status" value="1"/>
</dbReference>
<organism>
    <name type="scientific">Bacillus cereus (strain Q1)</name>
    <dbReference type="NCBI Taxonomy" id="361100"/>
    <lineage>
        <taxon>Bacteria</taxon>
        <taxon>Bacillati</taxon>
        <taxon>Bacillota</taxon>
        <taxon>Bacilli</taxon>
        <taxon>Bacillales</taxon>
        <taxon>Bacillaceae</taxon>
        <taxon>Bacillus</taxon>
        <taxon>Bacillus cereus group</taxon>
    </lineage>
</organism>
<sequence length="475" mass="53238">MNLETIIGLEVHVELKTNSKIFSASPTEFGAEPNTQTSVIDLGYPGVLPTLNKEAVNFAMKAAMALNCEIATETKFDRKNYFYPDNPKAYQISQFDKPIGENGWIEIEVDGKKKRIGITRLHLEEDAGKSTHTADGSLVDYNRQGMPLIEIVSEPDMRTPEEAYAYLEKLKSIIQYTGVSDCKMEEGSLRCDANISLRPVGQEKFGTKAELKNLNSFTYVQKGLEHEQVRQEKELLSGGIIQQETRRYDEATKKTILMRVKEGSDDYRYFPEPDLVELYIDDEWKEAVRASIPELPDARKARYVAELGLPAYDAHVLTLTKEMSDFFEATVADGADAKLTSNWLMGEVLAYLNKQQKELKDVALTPAGLSKMVQLIEKGTISSKIAKKVFNELIEKGGDPEEIVKAKGLVQISDEGTLRKVVTEILDNNEQSIEDFKNGKDRAIGFLVGQIMKATKGQANPPLVNKILLEEINKR</sequence>
<name>GATB_BACCQ</name>
<comment type="function">
    <text evidence="1">Allows the formation of correctly charged Asn-tRNA(Asn) or Gln-tRNA(Gln) through the transamidation of misacylated Asp-tRNA(Asn) or Glu-tRNA(Gln) in organisms which lack either or both of asparaginyl-tRNA or glutaminyl-tRNA synthetases. The reaction takes place in the presence of glutamine and ATP through an activated phospho-Asp-tRNA(Asn) or phospho-Glu-tRNA(Gln).</text>
</comment>
<comment type="catalytic activity">
    <reaction evidence="1">
        <text>L-glutamyl-tRNA(Gln) + L-glutamine + ATP + H2O = L-glutaminyl-tRNA(Gln) + L-glutamate + ADP + phosphate + H(+)</text>
        <dbReference type="Rhea" id="RHEA:17521"/>
        <dbReference type="Rhea" id="RHEA-COMP:9681"/>
        <dbReference type="Rhea" id="RHEA-COMP:9684"/>
        <dbReference type="ChEBI" id="CHEBI:15377"/>
        <dbReference type="ChEBI" id="CHEBI:15378"/>
        <dbReference type="ChEBI" id="CHEBI:29985"/>
        <dbReference type="ChEBI" id="CHEBI:30616"/>
        <dbReference type="ChEBI" id="CHEBI:43474"/>
        <dbReference type="ChEBI" id="CHEBI:58359"/>
        <dbReference type="ChEBI" id="CHEBI:78520"/>
        <dbReference type="ChEBI" id="CHEBI:78521"/>
        <dbReference type="ChEBI" id="CHEBI:456216"/>
    </reaction>
</comment>
<comment type="catalytic activity">
    <reaction evidence="1">
        <text>L-aspartyl-tRNA(Asn) + L-glutamine + ATP + H2O = L-asparaginyl-tRNA(Asn) + L-glutamate + ADP + phosphate + 2 H(+)</text>
        <dbReference type="Rhea" id="RHEA:14513"/>
        <dbReference type="Rhea" id="RHEA-COMP:9674"/>
        <dbReference type="Rhea" id="RHEA-COMP:9677"/>
        <dbReference type="ChEBI" id="CHEBI:15377"/>
        <dbReference type="ChEBI" id="CHEBI:15378"/>
        <dbReference type="ChEBI" id="CHEBI:29985"/>
        <dbReference type="ChEBI" id="CHEBI:30616"/>
        <dbReference type="ChEBI" id="CHEBI:43474"/>
        <dbReference type="ChEBI" id="CHEBI:58359"/>
        <dbReference type="ChEBI" id="CHEBI:78515"/>
        <dbReference type="ChEBI" id="CHEBI:78516"/>
        <dbReference type="ChEBI" id="CHEBI:456216"/>
    </reaction>
</comment>
<comment type="subunit">
    <text evidence="1">Heterotrimer of A, B and C subunits.</text>
</comment>
<comment type="similarity">
    <text evidence="1">Belongs to the GatB/GatE family. GatB subfamily.</text>
</comment>
<feature type="chain" id="PRO_1000122508" description="Aspartyl/glutamyl-tRNA(Asn/Gln) amidotransferase subunit B">
    <location>
        <begin position="1"/>
        <end position="475"/>
    </location>
</feature>